<protein>
    <recommendedName>
        <fullName evidence="1">Tol-Pal system protein TolB</fullName>
    </recommendedName>
</protein>
<organism>
    <name type="scientific">Rhizobium etli (strain ATCC 51251 / DSM 11541 / JCM 21823 / NBRC 15573 / CFN 42)</name>
    <dbReference type="NCBI Taxonomy" id="347834"/>
    <lineage>
        <taxon>Bacteria</taxon>
        <taxon>Pseudomonadati</taxon>
        <taxon>Pseudomonadota</taxon>
        <taxon>Alphaproteobacteria</taxon>
        <taxon>Hyphomicrobiales</taxon>
        <taxon>Rhizobiaceae</taxon>
        <taxon>Rhizobium/Agrobacterium group</taxon>
        <taxon>Rhizobium</taxon>
    </lineage>
</organism>
<name>TOLB_RHIEC</name>
<reference key="1">
    <citation type="journal article" date="2006" name="Proc. Natl. Acad. Sci. U.S.A.">
        <title>The partitioned Rhizobium etli genome: genetic and metabolic redundancy in seven interacting replicons.</title>
        <authorList>
            <person name="Gonzalez V."/>
            <person name="Santamaria R.I."/>
            <person name="Bustos P."/>
            <person name="Hernandez-Gonzalez I."/>
            <person name="Medrano-Soto A."/>
            <person name="Moreno-Hagelsieb G."/>
            <person name="Janga S.C."/>
            <person name="Ramirez M.A."/>
            <person name="Jimenez-Jacinto V."/>
            <person name="Collado-Vides J."/>
            <person name="Davila G."/>
        </authorList>
    </citation>
    <scope>NUCLEOTIDE SEQUENCE [LARGE SCALE GENOMIC DNA]</scope>
    <source>
        <strain>ATCC 51251 / DSM 11541 / JCM 21823 / NBRC 15573 / CFN 42</strain>
    </source>
</reference>
<sequence>MVKCSLIRALMVVAGLVGAAAFTTPANALVELNINKGNIQPLPIAVTDFLQGDMGAQVSQVIAADLQRSGLFAPINKTAFIEKISNPDAAPRFEDWKVINAQALVTGRVTQEADGRLRAEFRLWDTFAGQQMTGQQFYTQPENWRRVAHIIADAIYKQITGEEGYFDTRVVFVSESGTKQQRKRQLAIMDQDGFNVRTLTDGSDLVLTPRFSPSRQEVTYMSFANQQPRVYLLQLETGQREVVGNFPGMTFSPRFSPDGQKVIMSLQQEGNSNIYTMDLRSRTTTRLTSTAAIDTSPSYSPDGARVSFESDRGGKPQIYVMNADGSGQTRISFGDGSYSTPVWSPRGDLIAFTKQSGGKFSIGVMKPDGSGERILTSGFHNEGPTWAPNGRVLMFFRQAAGAGGPQLYSIDLTGYNEQLVKTPSYASDPAWSPLLE</sequence>
<proteinExistence type="inferred from homology"/>
<evidence type="ECO:0000255" key="1">
    <source>
        <dbReference type="HAMAP-Rule" id="MF_00671"/>
    </source>
</evidence>
<keyword id="KW-0131">Cell cycle</keyword>
<keyword id="KW-0132">Cell division</keyword>
<keyword id="KW-0574">Periplasm</keyword>
<keyword id="KW-1185">Reference proteome</keyword>
<keyword id="KW-0732">Signal</keyword>
<gene>
    <name evidence="1" type="primary">tolB</name>
    <name type="ordered locus">RHE_CH03462</name>
</gene>
<feature type="signal peptide" evidence="1">
    <location>
        <begin position="1"/>
        <end position="19"/>
    </location>
</feature>
<feature type="chain" id="PRO_0000259076" description="Tol-Pal system protein TolB" evidence="1">
    <location>
        <begin position="20"/>
        <end position="436"/>
    </location>
</feature>
<comment type="function">
    <text evidence="1">Part of the Tol-Pal system, which plays a role in outer membrane invagination during cell division and is important for maintaining outer membrane integrity.</text>
</comment>
<comment type="subunit">
    <text evidence="1">The Tol-Pal system is composed of five core proteins: the inner membrane proteins TolA, TolQ and TolR, the periplasmic protein TolB and the outer membrane protein Pal. They form a network linking the inner and outer membranes and the peptidoglycan layer.</text>
</comment>
<comment type="subcellular location">
    <subcellularLocation>
        <location evidence="1">Periplasm</location>
    </subcellularLocation>
</comment>
<comment type="similarity">
    <text evidence="1">Belongs to the TolB family.</text>
</comment>
<accession>Q2K4L8</accession>
<dbReference type="EMBL" id="CP000133">
    <property type="protein sequence ID" value="ABC92218.1"/>
    <property type="molecule type" value="Genomic_DNA"/>
</dbReference>
<dbReference type="RefSeq" id="WP_011426687.1">
    <property type="nucleotide sequence ID" value="NC_007761.1"/>
</dbReference>
<dbReference type="SMR" id="Q2K4L8"/>
<dbReference type="KEGG" id="ret:RHE_CH03462"/>
<dbReference type="eggNOG" id="COG0823">
    <property type="taxonomic scope" value="Bacteria"/>
</dbReference>
<dbReference type="HOGENOM" id="CLU_047123_0_0_5"/>
<dbReference type="OrthoDB" id="9802240at2"/>
<dbReference type="Proteomes" id="UP000001936">
    <property type="component" value="Chromosome"/>
</dbReference>
<dbReference type="GO" id="GO:0042597">
    <property type="term" value="C:periplasmic space"/>
    <property type="evidence" value="ECO:0007669"/>
    <property type="project" value="UniProtKB-SubCell"/>
</dbReference>
<dbReference type="GO" id="GO:0051301">
    <property type="term" value="P:cell division"/>
    <property type="evidence" value="ECO:0007669"/>
    <property type="project" value="UniProtKB-UniRule"/>
</dbReference>
<dbReference type="GO" id="GO:0017038">
    <property type="term" value="P:protein import"/>
    <property type="evidence" value="ECO:0007669"/>
    <property type="project" value="InterPro"/>
</dbReference>
<dbReference type="Gene3D" id="2.120.10.30">
    <property type="entry name" value="TolB, C-terminal domain"/>
    <property type="match status" value="1"/>
</dbReference>
<dbReference type="Gene3D" id="3.40.50.10070">
    <property type="entry name" value="TolB, N-terminal domain"/>
    <property type="match status" value="1"/>
</dbReference>
<dbReference type="HAMAP" id="MF_00671">
    <property type="entry name" value="TolB"/>
    <property type="match status" value="1"/>
</dbReference>
<dbReference type="InterPro" id="IPR011042">
    <property type="entry name" value="6-blade_b-propeller_TolB-like"/>
</dbReference>
<dbReference type="InterPro" id="IPR011659">
    <property type="entry name" value="PD40"/>
</dbReference>
<dbReference type="InterPro" id="IPR014167">
    <property type="entry name" value="Tol-Pal_TolB"/>
</dbReference>
<dbReference type="InterPro" id="IPR007195">
    <property type="entry name" value="TolB_N"/>
</dbReference>
<dbReference type="NCBIfam" id="TIGR02800">
    <property type="entry name" value="propeller_TolB"/>
    <property type="match status" value="1"/>
</dbReference>
<dbReference type="PANTHER" id="PTHR36842:SF1">
    <property type="entry name" value="PROTEIN TOLB"/>
    <property type="match status" value="1"/>
</dbReference>
<dbReference type="PANTHER" id="PTHR36842">
    <property type="entry name" value="PROTEIN TOLB HOMOLOG"/>
    <property type="match status" value="1"/>
</dbReference>
<dbReference type="Pfam" id="PF07676">
    <property type="entry name" value="PD40"/>
    <property type="match status" value="3"/>
</dbReference>
<dbReference type="Pfam" id="PF04052">
    <property type="entry name" value="TolB_N"/>
    <property type="match status" value="1"/>
</dbReference>
<dbReference type="SUPFAM" id="SSF52964">
    <property type="entry name" value="TolB, N-terminal domain"/>
    <property type="match status" value="1"/>
</dbReference>
<dbReference type="SUPFAM" id="SSF69304">
    <property type="entry name" value="Tricorn protease N-terminal domain"/>
    <property type="match status" value="1"/>
</dbReference>